<sequence length="376" mass="41621">MLDLIQTRRDLHQIPEIGLEEFKTQAYLLDVIEKLTTGKDFVQIRTWRTGILVYLQGSQPERTIGWRTDIDGLPIVEQTGLPFASQHQGRMHACGHDFHMTIALGCLERALEEQPKNNLLFLFQPAEENEAGGMLMYEDGAFGDWLPNQFYGLHVRPDLKVGQIATNTHTLFAGTCEVKIRFKGKGGHAAFPHEANDALVAASYFVTQVQSVVSRNVNPIEGAVVTFGVFQAGTTNNVITDTAFLHGTIRALTQDMSLLVQKRVKTVAEGVAAAFDMEVEVELKQGGYLPVENNPALARELMDFFDEKDGIELIDIEPAMTGEDFGYLLSKVDGVMFWLGIDSPYALHHPQMSPKEEVLAIGVAAVSSFLKKKAAE</sequence>
<feature type="chain" id="PRO_1000187460" description="N-acetyldiaminopimelate deacetylase">
    <location>
        <begin position="1"/>
        <end position="376"/>
    </location>
</feature>
<feature type="active site" evidence="1">
    <location>
        <position position="69"/>
    </location>
</feature>
<feature type="active site" description="Proton acceptor" evidence="1">
    <location>
        <position position="128"/>
    </location>
</feature>
<proteinExistence type="inferred from homology"/>
<gene>
    <name type="ordered locus">SP70585_2202</name>
</gene>
<reference key="1">
    <citation type="journal article" date="2010" name="Genome Biol.">
        <title>Structure and dynamics of the pan-genome of Streptococcus pneumoniae and closely related species.</title>
        <authorList>
            <person name="Donati C."/>
            <person name="Hiller N.L."/>
            <person name="Tettelin H."/>
            <person name="Muzzi A."/>
            <person name="Croucher N.J."/>
            <person name="Angiuoli S.V."/>
            <person name="Oggioni M."/>
            <person name="Dunning Hotopp J.C."/>
            <person name="Hu F.Z."/>
            <person name="Riley D.R."/>
            <person name="Covacci A."/>
            <person name="Mitchell T.J."/>
            <person name="Bentley S.D."/>
            <person name="Kilian M."/>
            <person name="Ehrlich G.D."/>
            <person name="Rappuoli R."/>
            <person name="Moxon E.R."/>
            <person name="Masignani V."/>
        </authorList>
    </citation>
    <scope>NUCLEOTIDE SEQUENCE [LARGE SCALE GENOMIC DNA]</scope>
    <source>
        <strain>70585</strain>
    </source>
</reference>
<keyword id="KW-0028">Amino-acid biosynthesis</keyword>
<keyword id="KW-0220">Diaminopimelate biosynthesis</keyword>
<keyword id="KW-0378">Hydrolase</keyword>
<keyword id="KW-0457">Lysine biosynthesis</keyword>
<accession>C1CAS3</accession>
<organism>
    <name type="scientific">Streptococcus pneumoniae (strain 70585)</name>
    <dbReference type="NCBI Taxonomy" id="488221"/>
    <lineage>
        <taxon>Bacteria</taxon>
        <taxon>Bacillati</taxon>
        <taxon>Bacillota</taxon>
        <taxon>Bacilli</taxon>
        <taxon>Lactobacillales</taxon>
        <taxon>Streptococcaceae</taxon>
        <taxon>Streptococcus</taxon>
    </lineage>
</organism>
<protein>
    <recommendedName>
        <fullName evidence="1">N-acetyldiaminopimelate deacetylase</fullName>
        <ecNumber evidence="1">3.5.1.47</ecNumber>
    </recommendedName>
</protein>
<name>DAPEL_STRP7</name>
<comment type="function">
    <text evidence="1">Catalyzes the conversion of N-acetyl-diaminopimelate to diaminopimelate and acetate.</text>
</comment>
<comment type="catalytic activity">
    <reaction evidence="1">
        <text>N-acetyl-(2S,6S)-2,6-diaminopimelate + H2O = (2S,6S)-2,6-diaminopimelate + acetate</text>
        <dbReference type="Rhea" id="RHEA:20405"/>
        <dbReference type="ChEBI" id="CHEBI:15377"/>
        <dbReference type="ChEBI" id="CHEBI:30089"/>
        <dbReference type="ChEBI" id="CHEBI:57609"/>
        <dbReference type="ChEBI" id="CHEBI:58767"/>
        <dbReference type="EC" id="3.5.1.47"/>
    </reaction>
</comment>
<comment type="pathway">
    <text evidence="1">Amino-acid biosynthesis; L-lysine biosynthesis via DAP pathway; LL-2,6-diaminopimelate from (S)-tetrahydrodipicolinate (acetylase route): step 3/3.</text>
</comment>
<comment type="similarity">
    <text evidence="1">Belongs to the peptidase M20A family. N-acetyldiaminopimelate deacetylase subfamily.</text>
</comment>
<evidence type="ECO:0000255" key="1">
    <source>
        <dbReference type="HAMAP-Rule" id="MF_01692"/>
    </source>
</evidence>
<dbReference type="EC" id="3.5.1.47" evidence="1"/>
<dbReference type="EMBL" id="CP000918">
    <property type="protein sequence ID" value="ACO16159.1"/>
    <property type="molecule type" value="Genomic_DNA"/>
</dbReference>
<dbReference type="RefSeq" id="WP_000886112.1">
    <property type="nucleotide sequence ID" value="NC_012468.1"/>
</dbReference>
<dbReference type="SMR" id="C1CAS3"/>
<dbReference type="KEGG" id="snm:SP70585_2202"/>
<dbReference type="HOGENOM" id="CLU_023257_0_1_9"/>
<dbReference type="UniPathway" id="UPA00034">
    <property type="reaction ID" value="UER00024"/>
</dbReference>
<dbReference type="Proteomes" id="UP000002211">
    <property type="component" value="Chromosome"/>
</dbReference>
<dbReference type="GO" id="GO:0050118">
    <property type="term" value="F:N-acetyldiaminopimelate deacetylase activity"/>
    <property type="evidence" value="ECO:0007669"/>
    <property type="project" value="UniProtKB-UniRule"/>
</dbReference>
<dbReference type="GO" id="GO:0019877">
    <property type="term" value="P:diaminopimelate biosynthetic process"/>
    <property type="evidence" value="ECO:0007669"/>
    <property type="project" value="UniProtKB-UniRule"/>
</dbReference>
<dbReference type="GO" id="GO:0009089">
    <property type="term" value="P:lysine biosynthetic process via diaminopimelate"/>
    <property type="evidence" value="ECO:0007669"/>
    <property type="project" value="UniProtKB-UniRule"/>
</dbReference>
<dbReference type="CDD" id="cd05670">
    <property type="entry name" value="M20_Acy1_YkuR-like"/>
    <property type="match status" value="1"/>
</dbReference>
<dbReference type="FunFam" id="3.30.70.360:FF:000001">
    <property type="entry name" value="N-acetyldiaminopimelate deacetylase"/>
    <property type="match status" value="1"/>
</dbReference>
<dbReference type="Gene3D" id="3.30.70.360">
    <property type="match status" value="1"/>
</dbReference>
<dbReference type="Gene3D" id="3.40.630.10">
    <property type="entry name" value="Zn peptidases"/>
    <property type="match status" value="1"/>
</dbReference>
<dbReference type="HAMAP" id="MF_01692">
    <property type="entry name" value="DapEL"/>
    <property type="match status" value="1"/>
</dbReference>
<dbReference type="InterPro" id="IPR023905">
    <property type="entry name" value="AcetylDAP_deacetylase"/>
</dbReference>
<dbReference type="InterPro" id="IPR017439">
    <property type="entry name" value="Amidohydrolase"/>
</dbReference>
<dbReference type="InterPro" id="IPR036264">
    <property type="entry name" value="Bact_exopeptidase_dim_dom"/>
</dbReference>
<dbReference type="InterPro" id="IPR002933">
    <property type="entry name" value="Peptidase_M20"/>
</dbReference>
<dbReference type="InterPro" id="IPR011650">
    <property type="entry name" value="Peptidase_M20_dimer"/>
</dbReference>
<dbReference type="NCBIfam" id="TIGR01891">
    <property type="entry name" value="amidohydrolases"/>
    <property type="match status" value="1"/>
</dbReference>
<dbReference type="PANTHER" id="PTHR11014:SF98">
    <property type="entry name" value="N-ACETYLDIAMINOPIMELATE DEACETYLASE"/>
    <property type="match status" value="1"/>
</dbReference>
<dbReference type="PANTHER" id="PTHR11014">
    <property type="entry name" value="PEPTIDASE M20 FAMILY MEMBER"/>
    <property type="match status" value="1"/>
</dbReference>
<dbReference type="Pfam" id="PF07687">
    <property type="entry name" value="M20_dimer"/>
    <property type="match status" value="1"/>
</dbReference>
<dbReference type="Pfam" id="PF01546">
    <property type="entry name" value="Peptidase_M20"/>
    <property type="match status" value="1"/>
</dbReference>
<dbReference type="PIRSF" id="PIRSF005962">
    <property type="entry name" value="Pept_M20D_amidohydro"/>
    <property type="match status" value="1"/>
</dbReference>
<dbReference type="SUPFAM" id="SSF55031">
    <property type="entry name" value="Bacterial exopeptidase dimerisation domain"/>
    <property type="match status" value="1"/>
</dbReference>
<dbReference type="SUPFAM" id="SSF53187">
    <property type="entry name" value="Zn-dependent exopeptidases"/>
    <property type="match status" value="1"/>
</dbReference>